<comment type="function">
    <text>Guanine nucleotide-binding proteins (G proteins) are involved as a modulator or transducer in various transmembrane signaling systems. The beta and gamma chains are required for the GTPase activity, for replacement of GDP by GTP, and for G protein-effector interaction.</text>
</comment>
<comment type="subunit">
    <text>G proteins are composed of 3 units, alpha, beta and gamma.</text>
</comment>
<comment type="subcellular location">
    <subcellularLocation>
        <location evidence="4">Cell membrane</location>
        <topology evidence="4">Lipid-anchor</topology>
        <orientation evidence="4">Cytoplasmic side</orientation>
    </subcellularLocation>
</comment>
<comment type="similarity">
    <text evidence="4">Belongs to the G protein gamma family.</text>
</comment>
<dbReference type="EMBL" id="AF038862">
    <property type="protein sequence ID" value="AAC98924.1"/>
    <property type="molecule type" value="mRNA"/>
</dbReference>
<dbReference type="RefSeq" id="NP_001003071.1">
    <property type="nucleotide sequence ID" value="NM_001003071.2"/>
</dbReference>
<dbReference type="RefSeq" id="XP_005624381.1">
    <property type="nucleotide sequence ID" value="XM_005624324.2"/>
</dbReference>
<dbReference type="RefSeq" id="XP_005624382.1">
    <property type="nucleotide sequence ID" value="XM_005624325.2"/>
</dbReference>
<dbReference type="RefSeq" id="XP_005624383.1">
    <property type="nucleotide sequence ID" value="XM_005624326.1"/>
</dbReference>
<dbReference type="RefSeq" id="XP_013971936.1">
    <property type="nucleotide sequence ID" value="XM_014116461.1"/>
</dbReference>
<dbReference type="RefSeq" id="XP_013971937.1">
    <property type="nucleotide sequence ID" value="XM_014116462.1"/>
</dbReference>
<dbReference type="RefSeq" id="XP_038530868.1">
    <property type="nucleotide sequence ID" value="XM_038674940.1"/>
</dbReference>
<dbReference type="RefSeq" id="XP_038530869.1">
    <property type="nucleotide sequence ID" value="XM_038674941.1"/>
</dbReference>
<dbReference type="RefSeq" id="XP_038530870.1">
    <property type="nucleotide sequence ID" value="XM_038674942.1"/>
</dbReference>
<dbReference type="RefSeq" id="XP_038530871.1">
    <property type="nucleotide sequence ID" value="XM_038674943.1"/>
</dbReference>
<dbReference type="SMR" id="O97564"/>
<dbReference type="FunCoup" id="O97564">
    <property type="interactions" value="296"/>
</dbReference>
<dbReference type="STRING" id="9615.ENSCAFP00000024872"/>
<dbReference type="PaxDb" id="9612-ENSCAFP00000024872"/>
<dbReference type="Ensembl" id="ENSCAFT00030002649.1">
    <property type="protein sequence ID" value="ENSCAFP00030002360.1"/>
    <property type="gene ID" value="ENSCAFG00030001482.1"/>
</dbReference>
<dbReference type="Ensembl" id="ENSCAFT00040017061.1">
    <property type="protein sequence ID" value="ENSCAFP00040014788.1"/>
    <property type="gene ID" value="ENSCAFG00040009199.1"/>
</dbReference>
<dbReference type="GeneID" id="403617"/>
<dbReference type="KEGG" id="cfa:403617"/>
<dbReference type="CTD" id="2793"/>
<dbReference type="eggNOG" id="KOG4119">
    <property type="taxonomic scope" value="Eukaryota"/>
</dbReference>
<dbReference type="HOGENOM" id="CLU_168377_2_1_1"/>
<dbReference type="InParanoid" id="O97564"/>
<dbReference type="OMA" id="SWLEIAW"/>
<dbReference type="OrthoDB" id="10978at33554"/>
<dbReference type="TreeFam" id="TF319909"/>
<dbReference type="Reactome" id="R-CFA-1296041">
    <property type="pathway name" value="Activation of G protein gated Potassium channels"/>
</dbReference>
<dbReference type="Reactome" id="R-CFA-202040">
    <property type="pathway name" value="G-protein activation"/>
</dbReference>
<dbReference type="Reactome" id="R-CFA-381676">
    <property type="pathway name" value="Glucagon-like Peptide-1 (GLP1) regulates insulin secretion"/>
</dbReference>
<dbReference type="Reactome" id="R-CFA-392170">
    <property type="pathway name" value="ADP signalling through P2Y purinoceptor 12"/>
</dbReference>
<dbReference type="Reactome" id="R-CFA-392451">
    <property type="pathway name" value="G beta:gamma signalling through PI3Kgamma"/>
</dbReference>
<dbReference type="Reactome" id="R-CFA-392851">
    <property type="pathway name" value="Prostacyclin signalling through prostacyclin receptor"/>
</dbReference>
<dbReference type="Reactome" id="R-CFA-400042">
    <property type="pathway name" value="Adrenaline,noradrenaline inhibits insulin secretion"/>
</dbReference>
<dbReference type="Reactome" id="R-CFA-4086398">
    <property type="pathway name" value="Ca2+ pathway"/>
</dbReference>
<dbReference type="Reactome" id="R-CFA-416476">
    <property type="pathway name" value="G alpha (q) signalling events"/>
</dbReference>
<dbReference type="Reactome" id="R-CFA-416482">
    <property type="pathway name" value="G alpha (12/13) signalling events"/>
</dbReference>
<dbReference type="Reactome" id="R-CFA-418217">
    <property type="pathway name" value="G beta:gamma signalling through PLC beta"/>
</dbReference>
<dbReference type="Reactome" id="R-CFA-418592">
    <property type="pathway name" value="ADP signalling through P2Y purinoceptor 1"/>
</dbReference>
<dbReference type="Reactome" id="R-CFA-418594">
    <property type="pathway name" value="G alpha (i) signalling events"/>
</dbReference>
<dbReference type="Reactome" id="R-CFA-418597">
    <property type="pathway name" value="G alpha (z) signalling events"/>
</dbReference>
<dbReference type="Reactome" id="R-CFA-420092">
    <property type="pathway name" value="Glucagon-type ligand receptors"/>
</dbReference>
<dbReference type="Reactome" id="R-CFA-428930">
    <property type="pathway name" value="Thromboxane signalling through TP receptor"/>
</dbReference>
<dbReference type="Reactome" id="R-CFA-432040">
    <property type="pathway name" value="Vasopressin regulates renal water homeostasis via Aquaporins"/>
</dbReference>
<dbReference type="Reactome" id="R-CFA-456926">
    <property type="pathway name" value="Thrombin signalling through proteinase activated receptors (PARs)"/>
</dbReference>
<dbReference type="Reactome" id="R-CFA-500657">
    <property type="pathway name" value="Presynaptic function of Kainate receptors"/>
</dbReference>
<dbReference type="Reactome" id="R-CFA-6814122">
    <property type="pathway name" value="Cooperation of PDCL (PhLP1) and TRiC/CCT in G-protein beta folding"/>
</dbReference>
<dbReference type="Reactome" id="R-CFA-8964315">
    <property type="pathway name" value="G beta:gamma signalling through BTK"/>
</dbReference>
<dbReference type="Reactome" id="R-CFA-8964616">
    <property type="pathway name" value="G beta:gamma signalling through CDC42"/>
</dbReference>
<dbReference type="Reactome" id="R-CFA-9009391">
    <property type="pathway name" value="Extra-nuclear estrogen signaling"/>
</dbReference>
<dbReference type="Reactome" id="R-CFA-9634597">
    <property type="pathway name" value="GPER1 signaling"/>
</dbReference>
<dbReference type="Reactome" id="R-CFA-9856530">
    <property type="pathway name" value="High laminar flow shear stress activates signaling by PIEZO1 and PECAM1:CDH5:KDR in endothelial cells"/>
</dbReference>
<dbReference type="Reactome" id="R-CFA-997272">
    <property type="pathway name" value="Inhibition of voltage gated Ca2+ channels via Gbeta/gamma subunits"/>
</dbReference>
<dbReference type="Proteomes" id="UP000002254">
    <property type="component" value="Unplaced"/>
</dbReference>
<dbReference type="Proteomes" id="UP000694429">
    <property type="component" value="Chromosome 9"/>
</dbReference>
<dbReference type="Proteomes" id="UP000694542">
    <property type="component" value="Chromosome 9"/>
</dbReference>
<dbReference type="Proteomes" id="UP000805418">
    <property type="component" value="Unplaced"/>
</dbReference>
<dbReference type="Bgee" id="ENSCAFG00000016918">
    <property type="expression patterns" value="Expressed in bone marrow and 48 other cell types or tissues"/>
</dbReference>
<dbReference type="GO" id="GO:0005834">
    <property type="term" value="C:heterotrimeric G-protein complex"/>
    <property type="evidence" value="ECO:0000318"/>
    <property type="project" value="GO_Central"/>
</dbReference>
<dbReference type="GO" id="GO:0031681">
    <property type="term" value="F:G-protein beta-subunit binding"/>
    <property type="evidence" value="ECO:0000318"/>
    <property type="project" value="GO_Central"/>
</dbReference>
<dbReference type="GO" id="GO:0007186">
    <property type="term" value="P:G protein-coupled receptor signaling pathway"/>
    <property type="evidence" value="ECO:0000318"/>
    <property type="project" value="GO_Central"/>
</dbReference>
<dbReference type="CDD" id="cd00068">
    <property type="entry name" value="GGL"/>
    <property type="match status" value="1"/>
</dbReference>
<dbReference type="FunFam" id="4.10.260.10:FF:000001">
    <property type="entry name" value="Guanine nucleotide-binding protein subunit gamma"/>
    <property type="match status" value="1"/>
</dbReference>
<dbReference type="Gene3D" id="4.10.260.10">
    <property type="entry name" value="Transducin (heterotrimeric G protein), gamma chain"/>
    <property type="match status" value="1"/>
</dbReference>
<dbReference type="InterPro" id="IPR015898">
    <property type="entry name" value="G-protein_gamma-like_dom"/>
</dbReference>
<dbReference type="InterPro" id="IPR036284">
    <property type="entry name" value="GGL_sf"/>
</dbReference>
<dbReference type="InterPro" id="IPR001770">
    <property type="entry name" value="Gprotein-gamma"/>
</dbReference>
<dbReference type="PANTHER" id="PTHR13809">
    <property type="entry name" value="GUANINE NUCLEOTIDE-BINDING PROTEIN GAMMA SUBUNIT"/>
    <property type="match status" value="1"/>
</dbReference>
<dbReference type="Pfam" id="PF00631">
    <property type="entry name" value="G-gamma"/>
    <property type="match status" value="1"/>
</dbReference>
<dbReference type="PRINTS" id="PR00321">
    <property type="entry name" value="GPROTEING"/>
</dbReference>
<dbReference type="SMART" id="SM01224">
    <property type="entry name" value="G_gamma"/>
    <property type="match status" value="1"/>
</dbReference>
<dbReference type="SMART" id="SM00224">
    <property type="entry name" value="GGL"/>
    <property type="match status" value="1"/>
</dbReference>
<dbReference type="SUPFAM" id="SSF48670">
    <property type="entry name" value="Transducin (heterotrimeric G protein), gamma chain"/>
    <property type="match status" value="1"/>
</dbReference>
<dbReference type="PROSITE" id="PS50058">
    <property type="entry name" value="G_PROTEIN_GAMMA"/>
    <property type="match status" value="1"/>
</dbReference>
<evidence type="ECO:0000250" key="1"/>
<evidence type="ECO:0000255" key="2"/>
<evidence type="ECO:0000256" key="3">
    <source>
        <dbReference type="SAM" id="MobiDB-lite"/>
    </source>
</evidence>
<evidence type="ECO:0000305" key="4"/>
<protein>
    <recommendedName>
        <fullName>Guanine nucleotide-binding protein G(I)/G(S)/G(O) subunit gamma-T2</fullName>
    </recommendedName>
    <alternativeName>
        <fullName>G gamma-C</fullName>
    </alternativeName>
    <alternativeName>
        <fullName>Tgamma c</fullName>
    </alternativeName>
</protein>
<name>GBGT2_CANLF</name>
<organism>
    <name type="scientific">Canis lupus familiaris</name>
    <name type="common">Dog</name>
    <name type="synonym">Canis familiaris</name>
    <dbReference type="NCBI Taxonomy" id="9615"/>
    <lineage>
        <taxon>Eukaryota</taxon>
        <taxon>Metazoa</taxon>
        <taxon>Chordata</taxon>
        <taxon>Craniata</taxon>
        <taxon>Vertebrata</taxon>
        <taxon>Euteleostomi</taxon>
        <taxon>Mammalia</taxon>
        <taxon>Eutheria</taxon>
        <taxon>Laurasiatheria</taxon>
        <taxon>Carnivora</taxon>
        <taxon>Caniformia</taxon>
        <taxon>Canidae</taxon>
        <taxon>Canis</taxon>
    </lineage>
</organism>
<feature type="chain" id="PRO_0000012643" description="Guanine nucleotide-binding protein G(I)/G(S)/G(O) subunit gamma-T2">
    <location>
        <begin position="1"/>
        <end position="66"/>
    </location>
</feature>
<feature type="propeptide" id="PRO_0000012644" description="Removed in mature form" evidence="1">
    <location>
        <begin position="67"/>
        <end position="69"/>
    </location>
</feature>
<feature type="region of interest" description="Disordered" evidence="3">
    <location>
        <begin position="47"/>
        <end position="69"/>
    </location>
</feature>
<feature type="compositionally biased region" description="Basic and acidic residues" evidence="3">
    <location>
        <begin position="53"/>
        <end position="69"/>
    </location>
</feature>
<feature type="modified residue" description="Cysteine methyl ester" evidence="2">
    <location>
        <position position="66"/>
    </location>
</feature>
<feature type="lipid moiety-binding region" description="S-farnesyl cysteine" evidence="1">
    <location>
        <position position="66"/>
    </location>
</feature>
<keyword id="KW-1003">Cell membrane</keyword>
<keyword id="KW-0449">Lipoprotein</keyword>
<keyword id="KW-0472">Membrane</keyword>
<keyword id="KW-0488">Methylation</keyword>
<keyword id="KW-0636">Prenylation</keyword>
<keyword id="KW-1185">Reference proteome</keyword>
<keyword id="KW-0807">Transducer</keyword>
<sequence>MAQELSEKELLKMEVEQLKKEVKNPRALISKTGKEIKDYVEAEAGNDPLLKGIPEDKNPFKEKGGCMIS</sequence>
<accession>O97564</accession>
<gene>
    <name type="primary">GNGT2</name>
</gene>
<reference key="1">
    <citation type="journal article" date="1998" name="Invest. Ophthalmol. Vis. Sci.">
        <title>Canine cone transducin-gamma gene and cone degeneration in the cd dog.</title>
        <authorList>
            <person name="Akhmedov N.B."/>
            <person name="Piriev N.I."/>
            <person name="Pearce-Kelling S."/>
            <person name="Acland G.M."/>
            <person name="Aguirre G.D."/>
            <person name="Farber D.B."/>
        </authorList>
    </citation>
    <scope>NUCLEOTIDE SEQUENCE [MRNA]</scope>
</reference>
<proteinExistence type="inferred from homology"/>